<gene>
    <name evidence="1" type="primary">mgsA</name>
    <name type="ordered locus">VPA0673</name>
</gene>
<feature type="chain" id="PRO_0000178653" description="Methylglyoxal synthase">
    <location>
        <begin position="1"/>
        <end position="151"/>
    </location>
</feature>
<feature type="domain" description="MGS-like" evidence="1">
    <location>
        <begin position="6"/>
        <end position="151"/>
    </location>
</feature>
<feature type="active site" description="Proton donor/acceptor" evidence="1">
    <location>
        <position position="71"/>
    </location>
</feature>
<feature type="binding site" evidence="1">
    <location>
        <position position="19"/>
    </location>
    <ligand>
        <name>substrate</name>
    </ligand>
</feature>
<feature type="binding site" evidence="1">
    <location>
        <position position="23"/>
    </location>
    <ligand>
        <name>substrate</name>
    </ligand>
</feature>
<feature type="binding site" evidence="1">
    <location>
        <begin position="45"/>
        <end position="48"/>
    </location>
    <ligand>
        <name>substrate</name>
    </ligand>
</feature>
<feature type="binding site" evidence="1">
    <location>
        <begin position="65"/>
        <end position="66"/>
    </location>
    <ligand>
        <name>substrate</name>
    </ligand>
</feature>
<feature type="binding site" evidence="1">
    <location>
        <position position="98"/>
    </location>
    <ligand>
        <name>substrate</name>
    </ligand>
</feature>
<proteinExistence type="inferred from homology"/>
<organism>
    <name type="scientific">Vibrio parahaemolyticus serotype O3:K6 (strain RIMD 2210633)</name>
    <dbReference type="NCBI Taxonomy" id="223926"/>
    <lineage>
        <taxon>Bacteria</taxon>
        <taxon>Pseudomonadati</taxon>
        <taxon>Pseudomonadota</taxon>
        <taxon>Gammaproteobacteria</taxon>
        <taxon>Vibrionales</taxon>
        <taxon>Vibrionaceae</taxon>
        <taxon>Vibrio</taxon>
    </lineage>
</organism>
<name>MGSA_VIBPA</name>
<dbReference type="EC" id="4.2.3.3" evidence="1"/>
<dbReference type="EMBL" id="BA000032">
    <property type="protein sequence ID" value="BAC62016.1"/>
    <property type="molecule type" value="Genomic_DNA"/>
</dbReference>
<dbReference type="RefSeq" id="NP_800183.1">
    <property type="nucleotide sequence ID" value="NC_004605.1"/>
</dbReference>
<dbReference type="RefSeq" id="WP_005454351.1">
    <property type="nucleotide sequence ID" value="NC_004605.1"/>
</dbReference>
<dbReference type="SMR" id="Q87ID3"/>
<dbReference type="GeneID" id="1191362"/>
<dbReference type="KEGG" id="vpa:VPA0673"/>
<dbReference type="PATRIC" id="fig|223926.6.peg.3609"/>
<dbReference type="eggNOG" id="COG1803">
    <property type="taxonomic scope" value="Bacteria"/>
</dbReference>
<dbReference type="HOGENOM" id="CLU_120420_0_1_6"/>
<dbReference type="Proteomes" id="UP000002493">
    <property type="component" value="Chromosome 2"/>
</dbReference>
<dbReference type="GO" id="GO:0005829">
    <property type="term" value="C:cytosol"/>
    <property type="evidence" value="ECO:0007669"/>
    <property type="project" value="TreeGrafter"/>
</dbReference>
<dbReference type="GO" id="GO:0008929">
    <property type="term" value="F:methylglyoxal synthase activity"/>
    <property type="evidence" value="ECO:0007669"/>
    <property type="project" value="UniProtKB-UniRule"/>
</dbReference>
<dbReference type="GO" id="GO:0019242">
    <property type="term" value="P:methylglyoxal biosynthetic process"/>
    <property type="evidence" value="ECO:0007669"/>
    <property type="project" value="UniProtKB-UniRule"/>
</dbReference>
<dbReference type="CDD" id="cd01422">
    <property type="entry name" value="MGS"/>
    <property type="match status" value="1"/>
</dbReference>
<dbReference type="FunFam" id="3.40.50.1380:FF:000002">
    <property type="entry name" value="Methylglyoxal synthase"/>
    <property type="match status" value="1"/>
</dbReference>
<dbReference type="Gene3D" id="3.40.50.1380">
    <property type="entry name" value="Methylglyoxal synthase-like domain"/>
    <property type="match status" value="1"/>
</dbReference>
<dbReference type="HAMAP" id="MF_00549">
    <property type="entry name" value="Methylglyoxal_synth"/>
    <property type="match status" value="1"/>
</dbReference>
<dbReference type="InterPro" id="IPR004363">
    <property type="entry name" value="Methylgl_synth"/>
</dbReference>
<dbReference type="InterPro" id="IPR018148">
    <property type="entry name" value="Methylglyoxal_synth_AS"/>
</dbReference>
<dbReference type="InterPro" id="IPR011607">
    <property type="entry name" value="MGS-like_dom"/>
</dbReference>
<dbReference type="InterPro" id="IPR036914">
    <property type="entry name" value="MGS-like_dom_sf"/>
</dbReference>
<dbReference type="NCBIfam" id="TIGR00160">
    <property type="entry name" value="MGSA"/>
    <property type="match status" value="1"/>
</dbReference>
<dbReference type="NCBIfam" id="NF003559">
    <property type="entry name" value="PRK05234.1"/>
    <property type="match status" value="1"/>
</dbReference>
<dbReference type="PANTHER" id="PTHR30492">
    <property type="entry name" value="METHYLGLYOXAL SYNTHASE"/>
    <property type="match status" value="1"/>
</dbReference>
<dbReference type="PANTHER" id="PTHR30492:SF0">
    <property type="entry name" value="METHYLGLYOXAL SYNTHASE"/>
    <property type="match status" value="1"/>
</dbReference>
<dbReference type="Pfam" id="PF02142">
    <property type="entry name" value="MGS"/>
    <property type="match status" value="1"/>
</dbReference>
<dbReference type="PIRSF" id="PIRSF006614">
    <property type="entry name" value="Methylglyox_syn"/>
    <property type="match status" value="1"/>
</dbReference>
<dbReference type="SMART" id="SM00851">
    <property type="entry name" value="MGS"/>
    <property type="match status" value="1"/>
</dbReference>
<dbReference type="SUPFAM" id="SSF52335">
    <property type="entry name" value="Methylglyoxal synthase-like"/>
    <property type="match status" value="1"/>
</dbReference>
<dbReference type="PROSITE" id="PS01335">
    <property type="entry name" value="METHYLGLYOXAL_SYNTH"/>
    <property type="match status" value="1"/>
</dbReference>
<dbReference type="PROSITE" id="PS51855">
    <property type="entry name" value="MGS"/>
    <property type="match status" value="1"/>
</dbReference>
<keyword id="KW-0456">Lyase</keyword>
<accession>Q87ID3</accession>
<sequence length="151" mass="16965">MQKTTRTMPAHKHVALVAHDNCKPELLRWVKENKEKLQRHFLYATGTTGHMLSKETGLAIKSMISGPMGGDQQLGALISEGKIDVLVFFWDPLNAVPHDPDVKALLRIASVWNIPVATNRATAKFLFDSPLLEQEVDIEVPDYEAYLAERM</sequence>
<comment type="function">
    <text evidence="1">Catalyzes the formation of methylglyoxal from dihydroxyacetone phosphate.</text>
</comment>
<comment type="catalytic activity">
    <reaction evidence="1">
        <text>dihydroxyacetone phosphate = methylglyoxal + phosphate</text>
        <dbReference type="Rhea" id="RHEA:17937"/>
        <dbReference type="ChEBI" id="CHEBI:17158"/>
        <dbReference type="ChEBI" id="CHEBI:43474"/>
        <dbReference type="ChEBI" id="CHEBI:57642"/>
        <dbReference type="EC" id="4.2.3.3"/>
    </reaction>
</comment>
<comment type="similarity">
    <text evidence="1">Belongs to the methylglyoxal synthase family.</text>
</comment>
<evidence type="ECO:0000255" key="1">
    <source>
        <dbReference type="HAMAP-Rule" id="MF_00549"/>
    </source>
</evidence>
<reference key="1">
    <citation type="journal article" date="2003" name="Lancet">
        <title>Genome sequence of Vibrio parahaemolyticus: a pathogenic mechanism distinct from that of V. cholerae.</title>
        <authorList>
            <person name="Makino K."/>
            <person name="Oshima K."/>
            <person name="Kurokawa K."/>
            <person name="Yokoyama K."/>
            <person name="Uda T."/>
            <person name="Tagomori K."/>
            <person name="Iijima Y."/>
            <person name="Najima M."/>
            <person name="Nakano M."/>
            <person name="Yamashita A."/>
            <person name="Kubota Y."/>
            <person name="Kimura S."/>
            <person name="Yasunaga T."/>
            <person name="Honda T."/>
            <person name="Shinagawa H."/>
            <person name="Hattori M."/>
            <person name="Iida T."/>
        </authorList>
    </citation>
    <scope>NUCLEOTIDE SEQUENCE [LARGE SCALE GENOMIC DNA]</scope>
    <source>
        <strain>RIMD 2210633</strain>
    </source>
</reference>
<protein>
    <recommendedName>
        <fullName evidence="1">Methylglyoxal synthase</fullName>
        <shortName evidence="1">MGS</shortName>
        <ecNumber evidence="1">4.2.3.3</ecNumber>
    </recommendedName>
</protein>